<gene>
    <name type="primary">MT-ND1</name>
    <name type="synonym">MTND1</name>
    <name type="synonym">NADH1</name>
    <name type="synonym">ND1</name>
</gene>
<proteinExistence type="inferred from homology"/>
<reference key="1">
    <citation type="journal article" date="1999" name="J. Comp. Physiol. A">
        <title>Evolutionary adaptations of cochlear function in Jamaican mormoopid bats.</title>
        <authorList>
            <person name="Kossl M."/>
            <person name="Mayer F."/>
            <person name="Frank G."/>
            <person name="Faulstich M."/>
            <person name="Russell I.J."/>
        </authorList>
    </citation>
    <scope>NUCLEOTIDE SEQUENCE [GENOMIC DNA]</scope>
</reference>
<dbReference type="EC" id="7.1.1.2" evidence="1"/>
<dbReference type="EMBL" id="AF143002">
    <property type="protein sequence ID" value="AAF66632.1"/>
    <property type="molecule type" value="Genomic_DNA"/>
</dbReference>
<dbReference type="SMR" id="Q9MP77"/>
<dbReference type="GO" id="GO:0005743">
    <property type="term" value="C:mitochondrial inner membrane"/>
    <property type="evidence" value="ECO:0007669"/>
    <property type="project" value="UniProtKB-SubCell"/>
</dbReference>
<dbReference type="GO" id="GO:0008137">
    <property type="term" value="F:NADH dehydrogenase (ubiquinone) activity"/>
    <property type="evidence" value="ECO:0000250"/>
    <property type="project" value="UniProtKB"/>
</dbReference>
<dbReference type="GO" id="GO:0006120">
    <property type="term" value="P:mitochondrial electron transport, NADH to ubiquinone"/>
    <property type="evidence" value="ECO:0000250"/>
    <property type="project" value="UniProtKB"/>
</dbReference>
<dbReference type="GO" id="GO:0032981">
    <property type="term" value="P:mitochondrial respiratory chain complex I assembly"/>
    <property type="evidence" value="ECO:0000250"/>
    <property type="project" value="UniProtKB"/>
</dbReference>
<dbReference type="HAMAP" id="MF_01350">
    <property type="entry name" value="NDH1_NuoH"/>
    <property type="match status" value="1"/>
</dbReference>
<dbReference type="InterPro" id="IPR001694">
    <property type="entry name" value="NADH_UbQ_OxRdtase_su1/FPO"/>
</dbReference>
<dbReference type="InterPro" id="IPR018086">
    <property type="entry name" value="NADH_UbQ_OxRdtase_su1_CS"/>
</dbReference>
<dbReference type="PANTHER" id="PTHR11432">
    <property type="entry name" value="NADH DEHYDROGENASE SUBUNIT 1"/>
    <property type="match status" value="1"/>
</dbReference>
<dbReference type="PANTHER" id="PTHR11432:SF3">
    <property type="entry name" value="NADH-UBIQUINONE OXIDOREDUCTASE CHAIN 1"/>
    <property type="match status" value="1"/>
</dbReference>
<dbReference type="Pfam" id="PF00146">
    <property type="entry name" value="NADHdh"/>
    <property type="match status" value="1"/>
</dbReference>
<dbReference type="PROSITE" id="PS00667">
    <property type="entry name" value="COMPLEX1_ND1_1"/>
    <property type="match status" value="1"/>
</dbReference>
<dbReference type="PROSITE" id="PS00668">
    <property type="entry name" value="COMPLEX1_ND1_2"/>
    <property type="match status" value="1"/>
</dbReference>
<feature type="chain" id="PRO_0000117411" description="NADH-ubiquinone oxidoreductase chain 1">
    <location>
        <begin position="1"/>
        <end position="318"/>
    </location>
</feature>
<feature type="transmembrane region" description="Helical" evidence="3">
    <location>
        <begin position="2"/>
        <end position="22"/>
    </location>
</feature>
<feature type="transmembrane region" description="Helical" evidence="3">
    <location>
        <begin position="68"/>
        <end position="88"/>
    </location>
</feature>
<feature type="transmembrane region" description="Helical" evidence="3">
    <location>
        <begin position="100"/>
        <end position="120"/>
    </location>
</feature>
<feature type="transmembrane region" description="Helical" evidence="3">
    <location>
        <begin position="146"/>
        <end position="166"/>
    </location>
</feature>
<feature type="transmembrane region" description="Helical" evidence="3">
    <location>
        <begin position="171"/>
        <end position="191"/>
    </location>
</feature>
<feature type="transmembrane region" description="Helical" evidence="3">
    <location>
        <begin position="222"/>
        <end position="242"/>
    </location>
</feature>
<feature type="transmembrane region" description="Helical" evidence="3">
    <location>
        <begin position="253"/>
        <end position="273"/>
    </location>
</feature>
<feature type="transmembrane region" description="Helical" evidence="3">
    <location>
        <begin position="293"/>
        <end position="313"/>
    </location>
</feature>
<comment type="function">
    <text evidence="1">Core subunit of the mitochondrial membrane respiratory chain NADH dehydrogenase (Complex I) which catalyzes electron transfer from NADH through the respiratory chain, using ubiquinone as an electron acceptor. Essential for the catalytic activity and assembly of complex I.</text>
</comment>
<comment type="catalytic activity">
    <reaction evidence="1">
        <text>a ubiquinone + NADH + 5 H(+)(in) = a ubiquinol + NAD(+) + 4 H(+)(out)</text>
        <dbReference type="Rhea" id="RHEA:29091"/>
        <dbReference type="Rhea" id="RHEA-COMP:9565"/>
        <dbReference type="Rhea" id="RHEA-COMP:9566"/>
        <dbReference type="ChEBI" id="CHEBI:15378"/>
        <dbReference type="ChEBI" id="CHEBI:16389"/>
        <dbReference type="ChEBI" id="CHEBI:17976"/>
        <dbReference type="ChEBI" id="CHEBI:57540"/>
        <dbReference type="ChEBI" id="CHEBI:57945"/>
        <dbReference type="EC" id="7.1.1.2"/>
    </reaction>
</comment>
<comment type="subunit">
    <text evidence="2">Core subunit of respiratory chain NADH dehydrogenase (Complex I) which is composed of 45 different subunits.</text>
</comment>
<comment type="subcellular location">
    <subcellularLocation>
        <location evidence="2">Mitochondrion inner membrane</location>
        <topology evidence="3">Multi-pass membrane protein</topology>
    </subcellularLocation>
</comment>
<comment type="similarity">
    <text evidence="4">Belongs to the complex I subunit 1 family.</text>
</comment>
<evidence type="ECO:0000250" key="1">
    <source>
        <dbReference type="UniProtKB" id="P03886"/>
    </source>
</evidence>
<evidence type="ECO:0000250" key="2">
    <source>
        <dbReference type="UniProtKB" id="P03887"/>
    </source>
</evidence>
<evidence type="ECO:0000255" key="3"/>
<evidence type="ECO:0000305" key="4"/>
<protein>
    <recommendedName>
        <fullName>NADH-ubiquinone oxidoreductase chain 1</fullName>
        <ecNumber evidence="1">7.1.1.2</ecNumber>
    </recommendedName>
    <alternativeName>
        <fullName>NADH dehydrogenase subunit 1</fullName>
    </alternativeName>
</protein>
<sequence length="318" mass="35719">MFMINLLLMIVPILLAVAFLTLVERKVLGYMQLRKGPNVVGPYGLLQPIADAIKLFTKEPLRPLTSSISMFIIAPILALALALTMWTPLPMPYPLINMNLGVLFMLAMSSLAVYSILWSGWASNSKYALIGALRAVAQTISYEVTLAIILLSVLLLNGSFTLPTLITTQEHMWLIIPSWPLAMMWFISTLAETNRAPFDLTEGESELVSGFNVEYAGGPFALFFLAEYANIIMMNIFTTILFLGAFHNPLMPELYTINFVTKSMLLTISFLWVRASYPRFRYDQLMHLLWKNFLPLTLALCMWHVTMPIITAGVPPLT</sequence>
<organism>
    <name type="scientific">Hipposideros diadema</name>
    <name type="common">Diadem leaf-nosed bat</name>
    <name type="synonym">Rhinolophus diadema</name>
    <dbReference type="NCBI Taxonomy" id="59453"/>
    <lineage>
        <taxon>Eukaryota</taxon>
        <taxon>Metazoa</taxon>
        <taxon>Chordata</taxon>
        <taxon>Craniata</taxon>
        <taxon>Vertebrata</taxon>
        <taxon>Euteleostomi</taxon>
        <taxon>Mammalia</taxon>
        <taxon>Eutheria</taxon>
        <taxon>Laurasiatheria</taxon>
        <taxon>Chiroptera</taxon>
        <taxon>Yinpterochiroptera</taxon>
        <taxon>Rhinolophoidea</taxon>
        <taxon>Hipposideridae</taxon>
        <taxon>Hipposideros</taxon>
    </lineage>
</organism>
<accession>Q9MP77</accession>
<keyword id="KW-0249">Electron transport</keyword>
<keyword id="KW-0472">Membrane</keyword>
<keyword id="KW-0496">Mitochondrion</keyword>
<keyword id="KW-0999">Mitochondrion inner membrane</keyword>
<keyword id="KW-0520">NAD</keyword>
<keyword id="KW-0679">Respiratory chain</keyword>
<keyword id="KW-1278">Translocase</keyword>
<keyword id="KW-0812">Transmembrane</keyword>
<keyword id="KW-1133">Transmembrane helix</keyword>
<keyword id="KW-0813">Transport</keyword>
<keyword id="KW-0830">Ubiquinone</keyword>
<geneLocation type="mitochondrion"/>
<name>NU1M_HIPDI</name>